<comment type="function">
    <text evidence="1">DNA-dependent RNA polymerase catalyzes the transcription of DNA into RNA using the four ribonucleoside triphosphates as substrates.</text>
</comment>
<comment type="catalytic activity">
    <reaction evidence="1">
        <text>RNA(n) + a ribonucleoside 5'-triphosphate = RNA(n+1) + diphosphate</text>
        <dbReference type="Rhea" id="RHEA:21248"/>
        <dbReference type="Rhea" id="RHEA-COMP:14527"/>
        <dbReference type="Rhea" id="RHEA-COMP:17342"/>
        <dbReference type="ChEBI" id="CHEBI:33019"/>
        <dbReference type="ChEBI" id="CHEBI:61557"/>
        <dbReference type="ChEBI" id="CHEBI:140395"/>
        <dbReference type="EC" id="2.7.7.6"/>
    </reaction>
</comment>
<comment type="cofactor">
    <cofactor evidence="1">
        <name>Mg(2+)</name>
        <dbReference type="ChEBI" id="CHEBI:18420"/>
    </cofactor>
    <text evidence="1">Binds 1 Mg(2+) ion per subunit.</text>
</comment>
<comment type="cofactor">
    <cofactor evidence="1">
        <name>Zn(2+)</name>
        <dbReference type="ChEBI" id="CHEBI:29105"/>
    </cofactor>
    <text evidence="1">Binds 2 Zn(2+) ions per subunit.</text>
</comment>
<comment type="subunit">
    <text evidence="1">The RNAP catalytic core consists of 2 alpha, 1 beta, 1 beta' and 1 omega subunit. When a sigma factor is associated with the core the holoenzyme is formed, which can initiate transcription.</text>
</comment>
<comment type="interaction">
    <interactant intactId="EBI-10065699">
        <id>Q727C6</id>
    </interactant>
    <interactant intactId="EBI-10066295">
        <id>Q727C7</id>
        <label>rpoB</label>
    </interactant>
    <organismsDiffer>false</organismsDiffer>
    <experiments>4</experiments>
</comment>
<comment type="similarity">
    <text evidence="1">Belongs to the RNA polymerase beta' chain family.</text>
</comment>
<evidence type="ECO:0000255" key="1">
    <source>
        <dbReference type="HAMAP-Rule" id="MF_01322"/>
    </source>
</evidence>
<dbReference type="EC" id="2.7.7.6" evidence="1"/>
<dbReference type="EMBL" id="AE017285">
    <property type="protein sequence ID" value="AAS97401.1"/>
    <property type="molecule type" value="Genomic_DNA"/>
</dbReference>
<dbReference type="RefSeq" id="WP_010940189.1">
    <property type="nucleotide sequence ID" value="NC_002937.3"/>
</dbReference>
<dbReference type="RefSeq" id="YP_012141.1">
    <property type="nucleotide sequence ID" value="NC_002937.3"/>
</dbReference>
<dbReference type="SMR" id="Q727C6"/>
<dbReference type="IntAct" id="Q727C6">
    <property type="interactions" value="7"/>
</dbReference>
<dbReference type="STRING" id="882.DVU_2929"/>
<dbReference type="PaxDb" id="882-DVU_2929"/>
<dbReference type="EnsemblBacteria" id="AAS97401">
    <property type="protein sequence ID" value="AAS97401"/>
    <property type="gene ID" value="DVU_2929"/>
</dbReference>
<dbReference type="KEGG" id="dvu:DVU_2929"/>
<dbReference type="PATRIC" id="fig|882.5.peg.2649"/>
<dbReference type="eggNOG" id="COG0086">
    <property type="taxonomic scope" value="Bacteria"/>
</dbReference>
<dbReference type="HOGENOM" id="CLU_000524_3_1_7"/>
<dbReference type="OrthoDB" id="9815296at2"/>
<dbReference type="PhylomeDB" id="Q727C6"/>
<dbReference type="Proteomes" id="UP000002194">
    <property type="component" value="Chromosome"/>
</dbReference>
<dbReference type="GO" id="GO:0000428">
    <property type="term" value="C:DNA-directed RNA polymerase complex"/>
    <property type="evidence" value="ECO:0007669"/>
    <property type="project" value="UniProtKB-KW"/>
</dbReference>
<dbReference type="GO" id="GO:0003677">
    <property type="term" value="F:DNA binding"/>
    <property type="evidence" value="ECO:0007669"/>
    <property type="project" value="UniProtKB-UniRule"/>
</dbReference>
<dbReference type="GO" id="GO:0003899">
    <property type="term" value="F:DNA-directed RNA polymerase activity"/>
    <property type="evidence" value="ECO:0007669"/>
    <property type="project" value="UniProtKB-UniRule"/>
</dbReference>
<dbReference type="GO" id="GO:0000287">
    <property type="term" value="F:magnesium ion binding"/>
    <property type="evidence" value="ECO:0007669"/>
    <property type="project" value="UniProtKB-UniRule"/>
</dbReference>
<dbReference type="GO" id="GO:0008270">
    <property type="term" value="F:zinc ion binding"/>
    <property type="evidence" value="ECO:0007669"/>
    <property type="project" value="UniProtKB-UniRule"/>
</dbReference>
<dbReference type="GO" id="GO:0006351">
    <property type="term" value="P:DNA-templated transcription"/>
    <property type="evidence" value="ECO:0007669"/>
    <property type="project" value="UniProtKB-UniRule"/>
</dbReference>
<dbReference type="CDD" id="cd02655">
    <property type="entry name" value="RNAP_beta'_C"/>
    <property type="match status" value="1"/>
</dbReference>
<dbReference type="CDD" id="cd01609">
    <property type="entry name" value="RNAP_beta'_N"/>
    <property type="match status" value="1"/>
</dbReference>
<dbReference type="FunFam" id="1.10.132.30:FF:000003">
    <property type="entry name" value="DNA-directed RNA polymerase subunit beta"/>
    <property type="match status" value="1"/>
</dbReference>
<dbReference type="FunFam" id="1.10.40.90:FF:000001">
    <property type="entry name" value="DNA-directed RNA polymerase subunit beta"/>
    <property type="match status" value="1"/>
</dbReference>
<dbReference type="Gene3D" id="1.10.132.30">
    <property type="match status" value="1"/>
</dbReference>
<dbReference type="Gene3D" id="1.10.150.390">
    <property type="match status" value="1"/>
</dbReference>
<dbReference type="Gene3D" id="1.10.1790.20">
    <property type="match status" value="1"/>
</dbReference>
<dbReference type="Gene3D" id="1.10.40.90">
    <property type="match status" value="1"/>
</dbReference>
<dbReference type="Gene3D" id="2.40.40.20">
    <property type="match status" value="1"/>
</dbReference>
<dbReference type="Gene3D" id="2.40.50.100">
    <property type="match status" value="3"/>
</dbReference>
<dbReference type="Gene3D" id="4.10.860.120">
    <property type="entry name" value="RNA polymerase II, clamp domain"/>
    <property type="match status" value="1"/>
</dbReference>
<dbReference type="Gene3D" id="1.10.274.100">
    <property type="entry name" value="RNA polymerase Rpb1, domain 3"/>
    <property type="match status" value="2"/>
</dbReference>
<dbReference type="HAMAP" id="MF_01322">
    <property type="entry name" value="RNApol_bact_RpoC"/>
    <property type="match status" value="1"/>
</dbReference>
<dbReference type="InterPro" id="IPR045867">
    <property type="entry name" value="DNA-dir_RpoC_beta_prime"/>
</dbReference>
<dbReference type="InterPro" id="IPR012754">
    <property type="entry name" value="DNA-dir_RpoC_beta_prime_bact"/>
</dbReference>
<dbReference type="InterPro" id="IPR000722">
    <property type="entry name" value="RNA_pol_asu"/>
</dbReference>
<dbReference type="InterPro" id="IPR006592">
    <property type="entry name" value="RNA_pol_N"/>
</dbReference>
<dbReference type="InterPro" id="IPR007080">
    <property type="entry name" value="RNA_pol_Rpb1_1"/>
</dbReference>
<dbReference type="InterPro" id="IPR007066">
    <property type="entry name" value="RNA_pol_Rpb1_3"/>
</dbReference>
<dbReference type="InterPro" id="IPR042102">
    <property type="entry name" value="RNA_pol_Rpb1_3_sf"/>
</dbReference>
<dbReference type="InterPro" id="IPR007083">
    <property type="entry name" value="RNA_pol_Rpb1_4"/>
</dbReference>
<dbReference type="InterPro" id="IPR007081">
    <property type="entry name" value="RNA_pol_Rpb1_5"/>
</dbReference>
<dbReference type="InterPro" id="IPR044893">
    <property type="entry name" value="RNA_pol_Rpb1_clamp_domain"/>
</dbReference>
<dbReference type="InterPro" id="IPR038120">
    <property type="entry name" value="Rpb1_funnel_sf"/>
</dbReference>
<dbReference type="NCBIfam" id="TIGR02386">
    <property type="entry name" value="rpoC_TIGR"/>
    <property type="match status" value="1"/>
</dbReference>
<dbReference type="PANTHER" id="PTHR19376">
    <property type="entry name" value="DNA-DIRECTED RNA POLYMERASE"/>
    <property type="match status" value="1"/>
</dbReference>
<dbReference type="PANTHER" id="PTHR19376:SF54">
    <property type="entry name" value="DNA-DIRECTED RNA POLYMERASE SUBUNIT BETA"/>
    <property type="match status" value="1"/>
</dbReference>
<dbReference type="Pfam" id="PF04997">
    <property type="entry name" value="RNA_pol_Rpb1_1"/>
    <property type="match status" value="1"/>
</dbReference>
<dbReference type="Pfam" id="PF00623">
    <property type="entry name" value="RNA_pol_Rpb1_2"/>
    <property type="match status" value="2"/>
</dbReference>
<dbReference type="Pfam" id="PF04983">
    <property type="entry name" value="RNA_pol_Rpb1_3"/>
    <property type="match status" value="1"/>
</dbReference>
<dbReference type="Pfam" id="PF05000">
    <property type="entry name" value="RNA_pol_Rpb1_4"/>
    <property type="match status" value="1"/>
</dbReference>
<dbReference type="Pfam" id="PF04998">
    <property type="entry name" value="RNA_pol_Rpb1_5"/>
    <property type="match status" value="1"/>
</dbReference>
<dbReference type="SMART" id="SM00663">
    <property type="entry name" value="RPOLA_N"/>
    <property type="match status" value="1"/>
</dbReference>
<dbReference type="SUPFAM" id="SSF64484">
    <property type="entry name" value="beta and beta-prime subunits of DNA dependent RNA-polymerase"/>
    <property type="match status" value="1"/>
</dbReference>
<accession>Q727C6</accession>
<organism>
    <name type="scientific">Nitratidesulfovibrio vulgaris (strain ATCC 29579 / DSM 644 / CCUG 34227 / NCIMB 8303 / VKM B-1760 / Hildenborough)</name>
    <name type="common">Desulfovibrio vulgaris</name>
    <dbReference type="NCBI Taxonomy" id="882"/>
    <lineage>
        <taxon>Bacteria</taxon>
        <taxon>Pseudomonadati</taxon>
        <taxon>Thermodesulfobacteriota</taxon>
        <taxon>Desulfovibrionia</taxon>
        <taxon>Desulfovibrionales</taxon>
        <taxon>Desulfovibrionaceae</taxon>
        <taxon>Nitratidesulfovibrio</taxon>
    </lineage>
</organism>
<proteinExistence type="evidence at protein level"/>
<feature type="chain" id="PRO_0000225532" description="DNA-directed RNA polymerase subunit beta'">
    <location>
        <begin position="1"/>
        <end position="1385"/>
    </location>
</feature>
<feature type="binding site" evidence="1">
    <location>
        <position position="75"/>
    </location>
    <ligand>
        <name>Zn(2+)</name>
        <dbReference type="ChEBI" id="CHEBI:29105"/>
        <label>1</label>
    </ligand>
</feature>
<feature type="binding site" evidence="1">
    <location>
        <position position="77"/>
    </location>
    <ligand>
        <name>Zn(2+)</name>
        <dbReference type="ChEBI" id="CHEBI:29105"/>
        <label>1</label>
    </ligand>
</feature>
<feature type="binding site" evidence="1">
    <location>
        <position position="90"/>
    </location>
    <ligand>
        <name>Zn(2+)</name>
        <dbReference type="ChEBI" id="CHEBI:29105"/>
        <label>1</label>
    </ligand>
</feature>
<feature type="binding site" evidence="1">
    <location>
        <position position="93"/>
    </location>
    <ligand>
        <name>Zn(2+)</name>
        <dbReference type="ChEBI" id="CHEBI:29105"/>
        <label>1</label>
    </ligand>
</feature>
<feature type="binding site" evidence="1">
    <location>
        <position position="466"/>
    </location>
    <ligand>
        <name>Mg(2+)</name>
        <dbReference type="ChEBI" id="CHEBI:18420"/>
    </ligand>
</feature>
<feature type="binding site" evidence="1">
    <location>
        <position position="468"/>
    </location>
    <ligand>
        <name>Mg(2+)</name>
        <dbReference type="ChEBI" id="CHEBI:18420"/>
    </ligand>
</feature>
<feature type="binding site" evidence="1">
    <location>
        <position position="470"/>
    </location>
    <ligand>
        <name>Mg(2+)</name>
        <dbReference type="ChEBI" id="CHEBI:18420"/>
    </ligand>
</feature>
<feature type="binding site" evidence="1">
    <location>
        <position position="809"/>
    </location>
    <ligand>
        <name>Zn(2+)</name>
        <dbReference type="ChEBI" id="CHEBI:29105"/>
        <label>2</label>
    </ligand>
</feature>
<feature type="binding site" evidence="1">
    <location>
        <position position="883"/>
    </location>
    <ligand>
        <name>Zn(2+)</name>
        <dbReference type="ChEBI" id="CHEBI:29105"/>
        <label>2</label>
    </ligand>
</feature>
<feature type="binding site" evidence="1">
    <location>
        <position position="890"/>
    </location>
    <ligand>
        <name>Zn(2+)</name>
        <dbReference type="ChEBI" id="CHEBI:29105"/>
        <label>2</label>
    </ligand>
</feature>
<feature type="binding site" evidence="1">
    <location>
        <position position="893"/>
    </location>
    <ligand>
        <name>Zn(2+)</name>
        <dbReference type="ChEBI" id="CHEBI:29105"/>
        <label>2</label>
    </ligand>
</feature>
<protein>
    <recommendedName>
        <fullName evidence="1">DNA-directed RNA polymerase subunit beta'</fullName>
        <shortName evidence="1">RNAP subunit beta'</shortName>
        <ecNumber evidence="1">2.7.7.6</ecNumber>
    </recommendedName>
    <alternativeName>
        <fullName evidence="1">RNA polymerase subunit beta'</fullName>
    </alternativeName>
    <alternativeName>
        <fullName evidence="1">Transcriptase subunit beta'</fullName>
    </alternativeName>
</protein>
<gene>
    <name evidence="1" type="primary">rpoC</name>
    <name type="ordered locus">DVU_2929</name>
</gene>
<name>RPOC_NITV2</name>
<sequence length="1385" mass="154813">MTLDDLFTVRGSAANIANIRNLKAIQITIASPENIREWSYGEVKKPETINYRTFKPERDGLFCAKIFGPVKDYECNCGKYKRMKHRGIVCEKCGVEVIASKVRRERMGHIELAAPVAHIWFLKTLPSKIGTLLDMTMADLEKVLYFDSYIVLDPGSTNLTKMQVISEDQYLQVIDHYGEDALTVGMGAEAVRSLLEELNLEELRVQLREESQATKSQTKKKKLTKRLKIVEAFLESNNKPEWMVMEVIPVIPPELRPLVPLDGGRFATSDLNDLYRRVINRNNRLKRLMELGAPDIIIRNEKRMLQEAVDALFDNGRRGRAITGTNGRPLKSLSDMIKGKQGRFRQNLLGKRVDYSGRSVIVVGPKLKLHQCGLPKKMALELFKPFIYSELEKRGLASTIKSAKKMVEREELVVWDILEEVVREYPIMLNRAPTLHRLGIQSFEPLLVEGKAIQLHPLVCSAYNADFDGDQMAVHVPLSVEAQIECRVLMMSTNNILSPANGSPVIVPSQDIVLGLYYMTVDRSFEKGENMSFCAPWEVVAAYDAGVVALHARINVRMEDGKVVRTTVGRILVWELLPHCVPFSMVNTTLTKKNIARLVSTAYRDAGTKATVILCDRLKDVGYEYATRAGVTIAVKDLTIPSTKKGLIETAQNEVDDIERQYRDGIITRTEKYNKVVDVWTKATQDVSNEMIREISSDIVEDPRTGAKEANSSFNSIYMMSTSGARGNQDQMRQLAGMRGLMAKPSGEIIETPITSSFREGLSVLQYFTSTHGARKGLADTALKTANSGYLTRRLVDVVQDVIVSEHDCGTVDGIELTHIKEGGEIKIPLADRALGRVLLYPVYDPETRDLLFPENTLVDENVAKVLVEREVSSVMIRSALTCQSDRGICTLCYGRDLARGHIVNIGETVGIIAAQSIGEPGTQLTMRTFHIGGTASREIERSSFEAQHPGRVILSRVKAVRNRDGQYMVMGKSGQLAIVDDQGREREKYTLPNGSRLLVTEGEEIRKGQILAEWDPFNEPFVSEVDGVIRFSDIVEGKTFQEKMDEATRMTTQTIIEYRTTNFRPSISICDEHGEVKMRGNNIPATYSLPVGAIIMVKNGQDLQAGDIIARKPRETSKTKDIVGGLPRVAELFEVRKPKDMAVVSEIAGIVTYAGETKGKRKLVVTPEIGEAKEYLVPKGKHITVTDGDFVEAGDLLTEGHPELHDILRTRGEKYLARYLTDEIQEVYRFQGVAIDDKHIEVIVRQMLKKVTVLDPGGTTFLVGEQVDKGEFRVENTRAMGEGRTPATAEPLVLGITQASLTTSSFISAASFQETTKVLTEASLRGKMDYLRGLKENVIVGRLIPAGTGYREYVNTDILVPEQRERPDKFLEDLEENPLLVDIY</sequence>
<reference key="1">
    <citation type="journal article" date="2004" name="Nat. Biotechnol.">
        <title>The genome sequence of the anaerobic, sulfate-reducing bacterium Desulfovibrio vulgaris Hildenborough.</title>
        <authorList>
            <person name="Heidelberg J.F."/>
            <person name="Seshadri R."/>
            <person name="Haveman S.A."/>
            <person name="Hemme C.L."/>
            <person name="Paulsen I.T."/>
            <person name="Kolonay J.F."/>
            <person name="Eisen J.A."/>
            <person name="Ward N.L."/>
            <person name="Methe B.A."/>
            <person name="Brinkac L.M."/>
            <person name="Daugherty S.C."/>
            <person name="DeBoy R.T."/>
            <person name="Dodson R.J."/>
            <person name="Durkin A.S."/>
            <person name="Madupu R."/>
            <person name="Nelson W.C."/>
            <person name="Sullivan S.A."/>
            <person name="Fouts D.E."/>
            <person name="Haft D.H."/>
            <person name="Selengut J."/>
            <person name="Peterson J.D."/>
            <person name="Davidsen T.M."/>
            <person name="Zafar N."/>
            <person name="Zhou L."/>
            <person name="Radune D."/>
            <person name="Dimitrov G."/>
            <person name="Hance M."/>
            <person name="Tran K."/>
            <person name="Khouri H.M."/>
            <person name="Gill J."/>
            <person name="Utterback T.R."/>
            <person name="Feldblyum T.V."/>
            <person name="Wall J.D."/>
            <person name="Voordouw G."/>
            <person name="Fraser C.M."/>
        </authorList>
    </citation>
    <scope>NUCLEOTIDE SEQUENCE [LARGE SCALE GENOMIC DNA]</scope>
    <source>
        <strain>ATCC 29579 / DSM 644 / CCUG 34227 / NCIMB 8303 / VKM B-1760 / Hildenborough</strain>
    </source>
</reference>
<keyword id="KW-0240">DNA-directed RNA polymerase</keyword>
<keyword id="KW-0460">Magnesium</keyword>
<keyword id="KW-0479">Metal-binding</keyword>
<keyword id="KW-0548">Nucleotidyltransferase</keyword>
<keyword id="KW-1185">Reference proteome</keyword>
<keyword id="KW-0804">Transcription</keyword>
<keyword id="KW-0808">Transferase</keyword>
<keyword id="KW-0862">Zinc</keyword>